<accession>P74860</accession>
<accession>P74889</accession>
<keyword id="KW-0653">Protein transport</keyword>
<keyword id="KW-1185">Reference proteome</keyword>
<keyword id="KW-0813">Transport</keyword>
<reference key="1">
    <citation type="journal article" date="2001" name="Nature">
        <title>Complete genome sequence of Salmonella enterica serovar Typhimurium LT2.</title>
        <authorList>
            <person name="McClelland M."/>
            <person name="Sanderson K.E."/>
            <person name="Spieth J."/>
            <person name="Clifton S.W."/>
            <person name="Latreille P."/>
            <person name="Courtney L."/>
            <person name="Porwollik S."/>
            <person name="Ali J."/>
            <person name="Dante M."/>
            <person name="Du F."/>
            <person name="Hou S."/>
            <person name="Layman D."/>
            <person name="Leonard S."/>
            <person name="Nguyen C."/>
            <person name="Scott K."/>
            <person name="Holmes A."/>
            <person name="Grewal N."/>
            <person name="Mulvaney E."/>
            <person name="Ryan E."/>
            <person name="Sun H."/>
            <person name="Florea L."/>
            <person name="Miller W."/>
            <person name="Stoneking T."/>
            <person name="Nhan M."/>
            <person name="Waterston R."/>
            <person name="Wilson R.K."/>
        </authorList>
    </citation>
    <scope>NUCLEOTIDE SEQUENCE [LARGE SCALE GENOMIC DNA]</scope>
    <source>
        <strain>LT2 / SGSC1412 / ATCC 700720</strain>
    </source>
</reference>
<reference key="2">
    <citation type="journal article" date="1997" name="Mol. Microbiol.">
        <title>Functional analysis of ssaJ and the ssaK/U operon, 13 genes encoding components of the type III secretion apparatus of Salmonella pathogenicity island 2.</title>
        <authorList>
            <person name="Hensel M."/>
            <person name="Shea J.E."/>
            <person name="Raupach B."/>
            <person name="Monack D."/>
            <person name="Falkow S."/>
            <person name="Gleeson C."/>
            <person name="Kubo T."/>
            <person name="Holden D.W."/>
        </authorList>
    </citation>
    <scope>NUCLEOTIDE SEQUENCE [GENOMIC DNA] OF 1-226</scope>
    <source>
        <strain>LT2</strain>
    </source>
</reference>
<reference key="3">
    <citation type="journal article" date="1997" name="J. Bacteriol.">
        <title>Analysis of the boundaries of Salmonella pathogenicity island 2 and the corresponding chromosomal region of Escherichia coli K-12.</title>
        <authorList>
            <person name="Hensel M."/>
            <person name="Shea J.E."/>
            <person name="Baeumler A.J."/>
            <person name="Gleeson C."/>
            <person name="Blattner F.R."/>
            <person name="Holden D.W."/>
        </authorList>
    </citation>
    <scope>NUCLEOTIDE SEQUENCE [GENOMIC DNA] OF 107-322</scope>
    <source>
        <strain>LT2</strain>
    </source>
</reference>
<evidence type="ECO:0000305" key="1"/>
<sequence length="322" mass="36009">MLRIANEERPWVEILPTQGATIGELTLSMQQYPVQQGTLFTINYHNELGRVWIAEQCWQRWCEGLIGTANRSAIDPELLYGIAEWGLAPLLQASDATLCQNEPPTSCSNLPHQLALHIKWTVEEHEFHSIIFTWPTGFLRNIVGELSAERQQIYPAPPVVVPVYSGWCQLTLIELESIEIGMGVRIHCFGDIRLGFFAIQLPGGIYARVLLTEDNTMKFDELVQDIETLLASGSPMSKSDGTSSVELEQIPQQVLFEVGRASLEIGQLRQLKTGDVLPVGGCFAPEVTIRVNDRIIGQGELIACGNEFMVRITRWYLCKNTA</sequence>
<name>SSAQ_SALTY</name>
<dbReference type="EMBL" id="AE006468">
    <property type="protein sequence ID" value="AAL20342.1"/>
    <property type="molecule type" value="Genomic_DNA"/>
</dbReference>
<dbReference type="EMBL" id="Y09357">
    <property type="protein sequence ID" value="CAA70540.1"/>
    <property type="molecule type" value="Genomic_DNA"/>
</dbReference>
<dbReference type="EMBL" id="X99944">
    <property type="protein sequence ID" value="CAA68198.1"/>
    <property type="molecule type" value="Genomic_DNA"/>
</dbReference>
<dbReference type="RefSeq" id="NP_460383.1">
    <property type="nucleotide sequence ID" value="NC_003197.2"/>
</dbReference>
<dbReference type="RefSeq" id="WP_000944192.1">
    <property type="nucleotide sequence ID" value="NC_003197.2"/>
</dbReference>
<dbReference type="SMR" id="P74860"/>
<dbReference type="IntAct" id="P74860">
    <property type="interactions" value="1"/>
</dbReference>
<dbReference type="STRING" id="99287.STM1418"/>
<dbReference type="PaxDb" id="99287-STM1418"/>
<dbReference type="GeneID" id="1252936"/>
<dbReference type="KEGG" id="stm:STM1418"/>
<dbReference type="PATRIC" id="fig|99287.12.peg.1502"/>
<dbReference type="HOGENOM" id="CLU_074817_0_0_6"/>
<dbReference type="OMA" id="RINCAAK"/>
<dbReference type="BioCyc" id="SENT99287:STM1418-MONOMER"/>
<dbReference type="Proteomes" id="UP000001014">
    <property type="component" value="Chromosome"/>
</dbReference>
<dbReference type="GO" id="GO:0009425">
    <property type="term" value="C:bacterial-type flagellum basal body"/>
    <property type="evidence" value="ECO:0007669"/>
    <property type="project" value="InterPro"/>
</dbReference>
<dbReference type="GO" id="GO:0030430">
    <property type="term" value="C:host cell cytoplasm"/>
    <property type="evidence" value="ECO:0000315"/>
    <property type="project" value="AgBase"/>
</dbReference>
<dbReference type="GO" id="GO:0033644">
    <property type="term" value="C:host cell membrane"/>
    <property type="evidence" value="ECO:0000315"/>
    <property type="project" value="AgBase"/>
</dbReference>
<dbReference type="GO" id="GO:0003774">
    <property type="term" value="F:cytoskeletal motor activity"/>
    <property type="evidence" value="ECO:0007669"/>
    <property type="project" value="InterPro"/>
</dbReference>
<dbReference type="GO" id="GO:0071978">
    <property type="term" value="P:bacterial-type flagellum-dependent swarming motility"/>
    <property type="evidence" value="ECO:0000318"/>
    <property type="project" value="GO_Central"/>
</dbReference>
<dbReference type="GO" id="GO:0050918">
    <property type="term" value="P:positive chemotaxis"/>
    <property type="evidence" value="ECO:0000318"/>
    <property type="project" value="GO_Central"/>
</dbReference>
<dbReference type="GO" id="GO:0030254">
    <property type="term" value="P:protein secretion by the type III secretion system"/>
    <property type="evidence" value="ECO:0007669"/>
    <property type="project" value="InterPro"/>
</dbReference>
<dbReference type="FunFam" id="2.30.330.10:FF:000006">
    <property type="entry name" value="SPI-2 type III secretion system apparatus protein SsaQ"/>
    <property type="match status" value="1"/>
</dbReference>
<dbReference type="Gene3D" id="2.30.330.10">
    <property type="entry name" value="SpoA-like"/>
    <property type="match status" value="1"/>
</dbReference>
<dbReference type="InterPro" id="IPR001543">
    <property type="entry name" value="FliN-like_C"/>
</dbReference>
<dbReference type="InterPro" id="IPR001172">
    <property type="entry name" value="FliN_T3SS_HrcQb"/>
</dbReference>
<dbReference type="InterPro" id="IPR036429">
    <property type="entry name" value="SpoA-like_sf"/>
</dbReference>
<dbReference type="InterPro" id="IPR013385">
    <property type="entry name" value="T3SS_SpaO/YscQ/SpaO"/>
</dbReference>
<dbReference type="NCBIfam" id="NF005956">
    <property type="entry name" value="PRK08035.1"/>
    <property type="match status" value="1"/>
</dbReference>
<dbReference type="NCBIfam" id="TIGR02551">
    <property type="entry name" value="SpaO_YscQ"/>
    <property type="match status" value="1"/>
</dbReference>
<dbReference type="PANTHER" id="PTHR30034">
    <property type="entry name" value="FLAGELLAR MOTOR SWITCH PROTEIN FLIM"/>
    <property type="match status" value="1"/>
</dbReference>
<dbReference type="PANTHER" id="PTHR30034:SF5">
    <property type="entry name" value="SECRETION SYSTEM APPARATUS PROTEIN SSAQ"/>
    <property type="match status" value="1"/>
</dbReference>
<dbReference type="Pfam" id="PF01052">
    <property type="entry name" value="FliMN_C"/>
    <property type="match status" value="1"/>
</dbReference>
<dbReference type="PRINTS" id="PR00956">
    <property type="entry name" value="FLGMOTORFLIN"/>
</dbReference>
<dbReference type="SUPFAM" id="SSF101801">
    <property type="entry name" value="Surface presentation of antigens (SPOA)"/>
    <property type="match status" value="1"/>
</dbReference>
<proteinExistence type="inferred from homology"/>
<gene>
    <name type="primary">ssaQ</name>
    <name type="ordered locus">STM1418</name>
</gene>
<organism>
    <name type="scientific">Salmonella typhimurium (strain LT2 / SGSC1412 / ATCC 700720)</name>
    <dbReference type="NCBI Taxonomy" id="99287"/>
    <lineage>
        <taxon>Bacteria</taxon>
        <taxon>Pseudomonadati</taxon>
        <taxon>Pseudomonadota</taxon>
        <taxon>Gammaproteobacteria</taxon>
        <taxon>Enterobacterales</taxon>
        <taxon>Enterobacteriaceae</taxon>
        <taxon>Salmonella</taxon>
    </lineage>
</organism>
<feature type="chain" id="PRO_0000184129" description="Secretion system apparatus protein SsaQ">
    <location>
        <begin position="1"/>
        <end position="322"/>
    </location>
</feature>
<comment type="function">
    <text>Part of a type III secretion system.</text>
</comment>
<comment type="similarity">
    <text evidence="1">Belongs to the FliN/MopA/SpaO family.</text>
</comment>
<protein>
    <recommendedName>
        <fullName>Secretion system apparatus protein SsaQ</fullName>
    </recommendedName>
</protein>